<proteinExistence type="inferred from homology"/>
<gene>
    <name evidence="1" type="primary">rpsR</name>
    <name type="ordered locus">SAV0367</name>
</gene>
<keyword id="KW-0687">Ribonucleoprotein</keyword>
<keyword id="KW-0689">Ribosomal protein</keyword>
<keyword id="KW-0694">RNA-binding</keyword>
<keyword id="KW-0699">rRNA-binding</keyword>
<feature type="chain" id="PRO_0000111225" description="Small ribosomal subunit protein bS18">
    <location>
        <begin position="1"/>
        <end position="80"/>
    </location>
</feature>
<protein>
    <recommendedName>
        <fullName evidence="1">Small ribosomal subunit protein bS18</fullName>
    </recommendedName>
    <alternativeName>
        <fullName evidence="2">30S ribosomal protein S18</fullName>
    </alternativeName>
</protein>
<organism>
    <name type="scientific">Staphylococcus aureus (strain Mu50 / ATCC 700699)</name>
    <dbReference type="NCBI Taxonomy" id="158878"/>
    <lineage>
        <taxon>Bacteria</taxon>
        <taxon>Bacillati</taxon>
        <taxon>Bacillota</taxon>
        <taxon>Bacilli</taxon>
        <taxon>Bacillales</taxon>
        <taxon>Staphylococcaceae</taxon>
        <taxon>Staphylococcus</taxon>
    </lineage>
</organism>
<dbReference type="EMBL" id="BA000017">
    <property type="protein sequence ID" value="BAB56529.1"/>
    <property type="molecule type" value="Genomic_DNA"/>
</dbReference>
<dbReference type="RefSeq" id="WP_000897044.1">
    <property type="nucleotide sequence ID" value="NC_002758.2"/>
</dbReference>
<dbReference type="SMR" id="P66467"/>
<dbReference type="GeneID" id="98344693"/>
<dbReference type="KEGG" id="sav:SAV0367"/>
<dbReference type="HOGENOM" id="CLU_148710_2_2_9"/>
<dbReference type="PhylomeDB" id="P66467"/>
<dbReference type="Proteomes" id="UP000002481">
    <property type="component" value="Chromosome"/>
</dbReference>
<dbReference type="GO" id="GO:0022627">
    <property type="term" value="C:cytosolic small ribosomal subunit"/>
    <property type="evidence" value="ECO:0007669"/>
    <property type="project" value="TreeGrafter"/>
</dbReference>
<dbReference type="GO" id="GO:0070181">
    <property type="term" value="F:small ribosomal subunit rRNA binding"/>
    <property type="evidence" value="ECO:0007669"/>
    <property type="project" value="TreeGrafter"/>
</dbReference>
<dbReference type="GO" id="GO:0003735">
    <property type="term" value="F:structural constituent of ribosome"/>
    <property type="evidence" value="ECO:0007669"/>
    <property type="project" value="InterPro"/>
</dbReference>
<dbReference type="GO" id="GO:0006412">
    <property type="term" value="P:translation"/>
    <property type="evidence" value="ECO:0007669"/>
    <property type="project" value="UniProtKB-UniRule"/>
</dbReference>
<dbReference type="FunFam" id="4.10.640.10:FF:000003">
    <property type="entry name" value="30S ribosomal protein S18"/>
    <property type="match status" value="1"/>
</dbReference>
<dbReference type="Gene3D" id="4.10.640.10">
    <property type="entry name" value="Ribosomal protein S18"/>
    <property type="match status" value="1"/>
</dbReference>
<dbReference type="HAMAP" id="MF_00270">
    <property type="entry name" value="Ribosomal_bS18"/>
    <property type="match status" value="1"/>
</dbReference>
<dbReference type="InterPro" id="IPR001648">
    <property type="entry name" value="Ribosomal_bS18"/>
</dbReference>
<dbReference type="InterPro" id="IPR018275">
    <property type="entry name" value="Ribosomal_bS18_CS"/>
</dbReference>
<dbReference type="InterPro" id="IPR036870">
    <property type="entry name" value="Ribosomal_bS18_sf"/>
</dbReference>
<dbReference type="NCBIfam" id="TIGR00165">
    <property type="entry name" value="S18"/>
    <property type="match status" value="1"/>
</dbReference>
<dbReference type="PANTHER" id="PTHR13479">
    <property type="entry name" value="30S RIBOSOMAL PROTEIN S18"/>
    <property type="match status" value="1"/>
</dbReference>
<dbReference type="PANTHER" id="PTHR13479:SF40">
    <property type="entry name" value="SMALL RIBOSOMAL SUBUNIT PROTEIN BS18M"/>
    <property type="match status" value="1"/>
</dbReference>
<dbReference type="Pfam" id="PF01084">
    <property type="entry name" value="Ribosomal_S18"/>
    <property type="match status" value="1"/>
</dbReference>
<dbReference type="PRINTS" id="PR00974">
    <property type="entry name" value="RIBOSOMALS18"/>
</dbReference>
<dbReference type="SUPFAM" id="SSF46911">
    <property type="entry name" value="Ribosomal protein S18"/>
    <property type="match status" value="1"/>
</dbReference>
<dbReference type="PROSITE" id="PS00057">
    <property type="entry name" value="RIBOSOMAL_S18"/>
    <property type="match status" value="1"/>
</dbReference>
<comment type="function">
    <text evidence="1">Binds as a heterodimer with protein bS6 to the central domain of the 16S rRNA, where it helps stabilize the platform of the 30S subunit.</text>
</comment>
<comment type="subunit">
    <text evidence="1">Part of the 30S ribosomal subunit. Forms a tight heterodimer with protein bS6.</text>
</comment>
<comment type="similarity">
    <text evidence="1">Belongs to the bacterial ribosomal protein bS18 family.</text>
</comment>
<sequence>MAGGPRRGGRRRKKVCYFTANGITHIDYKDTELLKRFISERGKILPRRVTGTSAKYQRMLTTAIKRSRHMALLPYVKEEQ</sequence>
<evidence type="ECO:0000255" key="1">
    <source>
        <dbReference type="HAMAP-Rule" id="MF_00270"/>
    </source>
</evidence>
<evidence type="ECO:0000305" key="2"/>
<accession>P66467</accession>
<accession>Q99WL0</accession>
<name>RS18_STAAM</name>
<reference key="1">
    <citation type="journal article" date="2001" name="Lancet">
        <title>Whole genome sequencing of meticillin-resistant Staphylococcus aureus.</title>
        <authorList>
            <person name="Kuroda M."/>
            <person name="Ohta T."/>
            <person name="Uchiyama I."/>
            <person name="Baba T."/>
            <person name="Yuzawa H."/>
            <person name="Kobayashi I."/>
            <person name="Cui L."/>
            <person name="Oguchi A."/>
            <person name="Aoki K."/>
            <person name="Nagai Y."/>
            <person name="Lian J.-Q."/>
            <person name="Ito T."/>
            <person name="Kanamori M."/>
            <person name="Matsumaru H."/>
            <person name="Maruyama A."/>
            <person name="Murakami H."/>
            <person name="Hosoyama A."/>
            <person name="Mizutani-Ui Y."/>
            <person name="Takahashi N.K."/>
            <person name="Sawano T."/>
            <person name="Inoue R."/>
            <person name="Kaito C."/>
            <person name="Sekimizu K."/>
            <person name="Hirakawa H."/>
            <person name="Kuhara S."/>
            <person name="Goto S."/>
            <person name="Yabuzaki J."/>
            <person name="Kanehisa M."/>
            <person name="Yamashita A."/>
            <person name="Oshima K."/>
            <person name="Furuya K."/>
            <person name="Yoshino C."/>
            <person name="Shiba T."/>
            <person name="Hattori M."/>
            <person name="Ogasawara N."/>
            <person name="Hayashi H."/>
            <person name="Hiramatsu K."/>
        </authorList>
    </citation>
    <scope>NUCLEOTIDE SEQUENCE [LARGE SCALE GENOMIC DNA]</scope>
    <source>
        <strain>Mu50 / ATCC 700699</strain>
    </source>
</reference>